<protein>
    <recommendedName>
        <fullName evidence="1">Histidine--tRNA ligase</fullName>
        <ecNumber evidence="1">6.1.1.21</ecNumber>
    </recommendedName>
    <alternativeName>
        <fullName evidence="1">Histidyl-tRNA synthetase</fullName>
        <shortName evidence="1">HisRS</shortName>
    </alternativeName>
</protein>
<sequence length="437" mass="49906">MKEQKLTTENYKGTRDFYPEDMRLRNYLFSVMKDVVRSYGYEEYDGPMVESLDLYRAKTGEEIVGKQIYNFIDKGDREVAIRPEMTPTVARMVAKKLRELPRPIRWFSIPNLWRYEQPGHGRLREHWQLNVDMFGVTSSRAELEILSLACDILFAFGAPKNSFKVTISHRSLLDEFLLDGLKVSPNQAHEVSKILDKKNKITQDEYVALVTKTIPNDSSAVSKIDLFLNATVNSLNQIPGIKEETLAAIKGLFEDIKTIGLSDIIHFDPSVVRGFDYYTGFIFEIFDTSPQNKRSLYGGGRYDNLIGLFSNEELTGIGFGLGDVTLQNFLTAHNLLPNFASDTTVFIPLLDDSSFAENHNFAKELRKEKISAEVSLVSQKMGKQLSYAEKKGYRWILLRGEDEIKTNTVTLKDMASRNQFTFSFSEALQKIKEELSK</sequence>
<keyword id="KW-0030">Aminoacyl-tRNA synthetase</keyword>
<keyword id="KW-0067">ATP-binding</keyword>
<keyword id="KW-0963">Cytoplasm</keyword>
<keyword id="KW-0436">Ligase</keyword>
<keyword id="KW-0547">Nucleotide-binding</keyword>
<keyword id="KW-0648">Protein biosynthesis</keyword>
<keyword id="KW-1185">Reference proteome</keyword>
<name>SYH_LEPBP</name>
<accession>B0SQQ4</accession>
<reference key="1">
    <citation type="journal article" date="2008" name="PLoS ONE">
        <title>Genome sequence of the saprophyte Leptospira biflexa provides insights into the evolution of Leptospira and the pathogenesis of leptospirosis.</title>
        <authorList>
            <person name="Picardeau M."/>
            <person name="Bulach D.M."/>
            <person name="Bouchier C."/>
            <person name="Zuerner R.L."/>
            <person name="Zidane N."/>
            <person name="Wilson P.J."/>
            <person name="Creno S."/>
            <person name="Kuczek E.S."/>
            <person name="Bommezzadri S."/>
            <person name="Davis J.C."/>
            <person name="McGrath A."/>
            <person name="Johnson M.J."/>
            <person name="Boursaux-Eude C."/>
            <person name="Seemann T."/>
            <person name="Rouy Z."/>
            <person name="Coppel R.L."/>
            <person name="Rood J.I."/>
            <person name="Lajus A."/>
            <person name="Davies J.K."/>
            <person name="Medigue C."/>
            <person name="Adler B."/>
        </authorList>
    </citation>
    <scope>NUCLEOTIDE SEQUENCE [LARGE SCALE GENOMIC DNA]</scope>
    <source>
        <strain>Patoc 1 / ATCC 23582 / Paris</strain>
    </source>
</reference>
<dbReference type="EC" id="6.1.1.21" evidence="1"/>
<dbReference type="EMBL" id="CP000786">
    <property type="protein sequence ID" value="ABZ99301.1"/>
    <property type="molecule type" value="Genomic_DNA"/>
</dbReference>
<dbReference type="RefSeq" id="WP_012390157.1">
    <property type="nucleotide sequence ID" value="NC_010602.1"/>
</dbReference>
<dbReference type="SMR" id="B0SQQ4"/>
<dbReference type="STRING" id="456481.LEPBI_I3236"/>
<dbReference type="KEGG" id="lbi:LEPBI_I3236"/>
<dbReference type="HOGENOM" id="CLU_025113_3_1_12"/>
<dbReference type="OrthoDB" id="9800814at2"/>
<dbReference type="BioCyc" id="LBIF456481:LEPBI_RS15850-MONOMER"/>
<dbReference type="Proteomes" id="UP000001847">
    <property type="component" value="Chromosome I"/>
</dbReference>
<dbReference type="GO" id="GO:0005737">
    <property type="term" value="C:cytoplasm"/>
    <property type="evidence" value="ECO:0007669"/>
    <property type="project" value="UniProtKB-SubCell"/>
</dbReference>
<dbReference type="GO" id="GO:0005524">
    <property type="term" value="F:ATP binding"/>
    <property type="evidence" value="ECO:0007669"/>
    <property type="project" value="UniProtKB-UniRule"/>
</dbReference>
<dbReference type="GO" id="GO:0004821">
    <property type="term" value="F:histidine-tRNA ligase activity"/>
    <property type="evidence" value="ECO:0007669"/>
    <property type="project" value="UniProtKB-UniRule"/>
</dbReference>
<dbReference type="GO" id="GO:0006427">
    <property type="term" value="P:histidyl-tRNA aminoacylation"/>
    <property type="evidence" value="ECO:0007669"/>
    <property type="project" value="UniProtKB-UniRule"/>
</dbReference>
<dbReference type="CDD" id="cd00773">
    <property type="entry name" value="HisRS-like_core"/>
    <property type="match status" value="1"/>
</dbReference>
<dbReference type="CDD" id="cd00859">
    <property type="entry name" value="HisRS_anticodon"/>
    <property type="match status" value="1"/>
</dbReference>
<dbReference type="Gene3D" id="3.40.50.800">
    <property type="entry name" value="Anticodon-binding domain"/>
    <property type="match status" value="1"/>
</dbReference>
<dbReference type="Gene3D" id="3.30.930.10">
    <property type="entry name" value="Bira Bifunctional Protein, Domain 2"/>
    <property type="match status" value="1"/>
</dbReference>
<dbReference type="HAMAP" id="MF_00127">
    <property type="entry name" value="His_tRNA_synth"/>
    <property type="match status" value="1"/>
</dbReference>
<dbReference type="InterPro" id="IPR006195">
    <property type="entry name" value="aa-tRNA-synth_II"/>
</dbReference>
<dbReference type="InterPro" id="IPR045864">
    <property type="entry name" value="aa-tRNA-synth_II/BPL/LPL"/>
</dbReference>
<dbReference type="InterPro" id="IPR004154">
    <property type="entry name" value="Anticodon-bd"/>
</dbReference>
<dbReference type="InterPro" id="IPR036621">
    <property type="entry name" value="Anticodon-bd_dom_sf"/>
</dbReference>
<dbReference type="InterPro" id="IPR015807">
    <property type="entry name" value="His-tRNA-ligase"/>
</dbReference>
<dbReference type="InterPro" id="IPR041715">
    <property type="entry name" value="HisRS-like_core"/>
</dbReference>
<dbReference type="InterPro" id="IPR004516">
    <property type="entry name" value="HisRS/HisZ"/>
</dbReference>
<dbReference type="InterPro" id="IPR033656">
    <property type="entry name" value="HisRS_anticodon"/>
</dbReference>
<dbReference type="NCBIfam" id="TIGR00442">
    <property type="entry name" value="hisS"/>
    <property type="match status" value="1"/>
</dbReference>
<dbReference type="PANTHER" id="PTHR43707:SF1">
    <property type="entry name" value="HISTIDINE--TRNA LIGASE, MITOCHONDRIAL-RELATED"/>
    <property type="match status" value="1"/>
</dbReference>
<dbReference type="PANTHER" id="PTHR43707">
    <property type="entry name" value="HISTIDYL-TRNA SYNTHETASE"/>
    <property type="match status" value="1"/>
</dbReference>
<dbReference type="Pfam" id="PF03129">
    <property type="entry name" value="HGTP_anticodon"/>
    <property type="match status" value="1"/>
</dbReference>
<dbReference type="Pfam" id="PF13393">
    <property type="entry name" value="tRNA-synt_His"/>
    <property type="match status" value="1"/>
</dbReference>
<dbReference type="PIRSF" id="PIRSF001549">
    <property type="entry name" value="His-tRNA_synth"/>
    <property type="match status" value="1"/>
</dbReference>
<dbReference type="SUPFAM" id="SSF52954">
    <property type="entry name" value="Class II aaRS ABD-related"/>
    <property type="match status" value="1"/>
</dbReference>
<dbReference type="SUPFAM" id="SSF55681">
    <property type="entry name" value="Class II aaRS and biotin synthetases"/>
    <property type="match status" value="1"/>
</dbReference>
<dbReference type="PROSITE" id="PS50862">
    <property type="entry name" value="AA_TRNA_LIGASE_II"/>
    <property type="match status" value="1"/>
</dbReference>
<comment type="catalytic activity">
    <reaction evidence="1">
        <text>tRNA(His) + L-histidine + ATP = L-histidyl-tRNA(His) + AMP + diphosphate + H(+)</text>
        <dbReference type="Rhea" id="RHEA:17313"/>
        <dbReference type="Rhea" id="RHEA-COMP:9665"/>
        <dbReference type="Rhea" id="RHEA-COMP:9689"/>
        <dbReference type="ChEBI" id="CHEBI:15378"/>
        <dbReference type="ChEBI" id="CHEBI:30616"/>
        <dbReference type="ChEBI" id="CHEBI:33019"/>
        <dbReference type="ChEBI" id="CHEBI:57595"/>
        <dbReference type="ChEBI" id="CHEBI:78442"/>
        <dbReference type="ChEBI" id="CHEBI:78527"/>
        <dbReference type="ChEBI" id="CHEBI:456215"/>
        <dbReference type="EC" id="6.1.1.21"/>
    </reaction>
</comment>
<comment type="subunit">
    <text evidence="1">Homodimer.</text>
</comment>
<comment type="subcellular location">
    <subcellularLocation>
        <location evidence="1">Cytoplasm</location>
    </subcellularLocation>
</comment>
<comment type="similarity">
    <text evidence="1">Belongs to the class-II aminoacyl-tRNA synthetase family.</text>
</comment>
<gene>
    <name evidence="1" type="primary">hisS</name>
    <name type="ordered locus">LEPBI_I3236</name>
</gene>
<feature type="chain" id="PRO_1000095568" description="Histidine--tRNA ligase">
    <location>
        <begin position="1"/>
        <end position="437"/>
    </location>
</feature>
<evidence type="ECO:0000255" key="1">
    <source>
        <dbReference type="HAMAP-Rule" id="MF_00127"/>
    </source>
</evidence>
<proteinExistence type="inferred from homology"/>
<organism>
    <name type="scientific">Leptospira biflexa serovar Patoc (strain Patoc 1 / ATCC 23582 / Paris)</name>
    <dbReference type="NCBI Taxonomy" id="456481"/>
    <lineage>
        <taxon>Bacteria</taxon>
        <taxon>Pseudomonadati</taxon>
        <taxon>Spirochaetota</taxon>
        <taxon>Spirochaetia</taxon>
        <taxon>Leptospirales</taxon>
        <taxon>Leptospiraceae</taxon>
        <taxon>Leptospira</taxon>
    </lineage>
</organism>